<feature type="chain" id="PRO_0000219977" description="Pyrroloquinoline-quinone synthase">
    <location>
        <begin position="1"/>
        <end position="259"/>
    </location>
</feature>
<reference key="1">
    <citation type="journal article" date="2002" name="DNA Res.">
        <title>Complete genomic sequence of nitrogen-fixing symbiotic bacterium Bradyrhizobium japonicum USDA110.</title>
        <authorList>
            <person name="Kaneko T."/>
            <person name="Nakamura Y."/>
            <person name="Sato S."/>
            <person name="Minamisawa K."/>
            <person name="Uchiumi T."/>
            <person name="Sasamoto S."/>
            <person name="Watanabe A."/>
            <person name="Idesawa K."/>
            <person name="Iriguchi M."/>
            <person name="Kawashima K."/>
            <person name="Kohara M."/>
            <person name="Matsumoto M."/>
            <person name="Shimpo S."/>
            <person name="Tsuruoka H."/>
            <person name="Wada T."/>
            <person name="Yamada M."/>
            <person name="Tabata S."/>
        </authorList>
    </citation>
    <scope>NUCLEOTIDE SEQUENCE [LARGE SCALE GENOMIC DNA]</scope>
    <source>
        <strain>JCM 10833 / BCRC 13528 / IAM 13628 / NBRC 14792 / USDA 110</strain>
    </source>
</reference>
<name>PQQC_BRADU</name>
<comment type="function">
    <text evidence="1">Ring cyclization and eight-electron oxidation of 3a-(2-amino-2-carboxyethyl)-4,5-dioxo-4,5,6,7,8,9-hexahydroquinoline-7,9-dicarboxylic-acid to PQQ.</text>
</comment>
<comment type="catalytic activity">
    <reaction evidence="1">
        <text>6-(2-amino-2-carboxyethyl)-7,8-dioxo-1,2,3,4,7,8-hexahydroquinoline-2,4-dicarboxylate + 3 O2 = pyrroloquinoline quinone + 2 H2O2 + 2 H2O + H(+)</text>
        <dbReference type="Rhea" id="RHEA:10692"/>
        <dbReference type="ChEBI" id="CHEBI:15377"/>
        <dbReference type="ChEBI" id="CHEBI:15378"/>
        <dbReference type="ChEBI" id="CHEBI:15379"/>
        <dbReference type="ChEBI" id="CHEBI:16240"/>
        <dbReference type="ChEBI" id="CHEBI:58442"/>
        <dbReference type="ChEBI" id="CHEBI:58778"/>
        <dbReference type="EC" id="1.3.3.11"/>
    </reaction>
</comment>
<comment type="pathway">
    <text evidence="1">Cofactor biosynthesis; pyrroloquinoline quinone biosynthesis.</text>
</comment>
<comment type="similarity">
    <text evidence="1">Belongs to the PqqC family.</text>
</comment>
<gene>
    <name evidence="1" type="primary">pqqC</name>
    <name type="ordered locus">blr6737</name>
</gene>
<evidence type="ECO:0000255" key="1">
    <source>
        <dbReference type="HAMAP-Rule" id="MF_00654"/>
    </source>
</evidence>
<sequence length="259" mass="29290">MNAASLTGITALSIGKDIKLNSAEELEAALRHIGATRYHSLHPFHKLLHGGKLNKGQVQAWALNRYYYQSTIPIKDAVVISRFRDRATRLEWRHRIEDHDGDVGSEGGIERWLKLTEGLGLDTAYVESTEGILPATRFAVEAYVHYCREKSPLEAIASSLTELFAPSIHEERIAGMLQHYDFVNPDIMSYFKRRLTQAPRDANFALEYVRTHARTPEERASVCNALIFKTNVLWVQLDALQHAYVEGHIPPGAFVPKEN</sequence>
<keyword id="KW-0560">Oxidoreductase</keyword>
<keyword id="KW-0884">PQQ biosynthesis</keyword>
<keyword id="KW-1185">Reference proteome</keyword>
<accession>Q89FG3</accession>
<organism>
    <name type="scientific">Bradyrhizobium diazoefficiens (strain JCM 10833 / BCRC 13528 / IAM 13628 / NBRC 14792 / USDA 110)</name>
    <dbReference type="NCBI Taxonomy" id="224911"/>
    <lineage>
        <taxon>Bacteria</taxon>
        <taxon>Pseudomonadati</taxon>
        <taxon>Pseudomonadota</taxon>
        <taxon>Alphaproteobacteria</taxon>
        <taxon>Hyphomicrobiales</taxon>
        <taxon>Nitrobacteraceae</taxon>
        <taxon>Bradyrhizobium</taxon>
    </lineage>
</organism>
<dbReference type="EC" id="1.3.3.11" evidence="1"/>
<dbReference type="EMBL" id="BA000040">
    <property type="protein sequence ID" value="BAC52002.1"/>
    <property type="molecule type" value="Genomic_DNA"/>
</dbReference>
<dbReference type="RefSeq" id="NP_773377.1">
    <property type="nucleotide sequence ID" value="NC_004463.1"/>
</dbReference>
<dbReference type="RefSeq" id="WP_011089476.1">
    <property type="nucleotide sequence ID" value="NC_004463.1"/>
</dbReference>
<dbReference type="SMR" id="Q89FG3"/>
<dbReference type="STRING" id="224911.AAV28_31280"/>
<dbReference type="EnsemblBacteria" id="BAC52002">
    <property type="protein sequence ID" value="BAC52002"/>
    <property type="gene ID" value="BAC52002"/>
</dbReference>
<dbReference type="GeneID" id="46493711"/>
<dbReference type="KEGG" id="bja:blr6737"/>
<dbReference type="PATRIC" id="fig|224911.44.peg.6758"/>
<dbReference type="eggNOG" id="COG5424">
    <property type="taxonomic scope" value="Bacteria"/>
</dbReference>
<dbReference type="HOGENOM" id="CLU_080136_0_0_5"/>
<dbReference type="InParanoid" id="Q89FG3"/>
<dbReference type="OrthoDB" id="9800756at2"/>
<dbReference type="PhylomeDB" id="Q89FG3"/>
<dbReference type="UniPathway" id="UPA00539"/>
<dbReference type="Proteomes" id="UP000002526">
    <property type="component" value="Chromosome"/>
</dbReference>
<dbReference type="GO" id="GO:0033732">
    <property type="term" value="F:pyrroloquinoline-quinone synthase activity"/>
    <property type="evidence" value="ECO:0007669"/>
    <property type="project" value="UniProtKB-EC"/>
</dbReference>
<dbReference type="GO" id="GO:0018189">
    <property type="term" value="P:pyrroloquinoline quinone biosynthetic process"/>
    <property type="evidence" value="ECO:0007669"/>
    <property type="project" value="UniProtKB-UniRule"/>
</dbReference>
<dbReference type="GO" id="GO:0006790">
    <property type="term" value="P:sulfur compound metabolic process"/>
    <property type="evidence" value="ECO:0007669"/>
    <property type="project" value="UniProtKB-ARBA"/>
</dbReference>
<dbReference type="Gene3D" id="1.20.910.10">
    <property type="entry name" value="Heme oxygenase-like"/>
    <property type="match status" value="1"/>
</dbReference>
<dbReference type="HAMAP" id="MF_00654">
    <property type="entry name" value="PQQ_syn_PqqC"/>
    <property type="match status" value="1"/>
</dbReference>
<dbReference type="InterPro" id="IPR016084">
    <property type="entry name" value="Haem_Oase-like_multi-hlx"/>
</dbReference>
<dbReference type="InterPro" id="IPR011845">
    <property type="entry name" value="PqqC"/>
</dbReference>
<dbReference type="InterPro" id="IPR039068">
    <property type="entry name" value="PqqC-like"/>
</dbReference>
<dbReference type="InterPro" id="IPR004305">
    <property type="entry name" value="Thiaminase-2/PQQC"/>
</dbReference>
<dbReference type="NCBIfam" id="TIGR02111">
    <property type="entry name" value="PQQ_syn_pqqC"/>
    <property type="match status" value="1"/>
</dbReference>
<dbReference type="PANTHER" id="PTHR40279:SF3">
    <property type="entry name" value="4-AMINOBENZOATE SYNTHASE"/>
    <property type="match status" value="1"/>
</dbReference>
<dbReference type="PANTHER" id="PTHR40279">
    <property type="entry name" value="PQQC-LIKE PROTEIN"/>
    <property type="match status" value="1"/>
</dbReference>
<dbReference type="Pfam" id="PF03070">
    <property type="entry name" value="TENA_THI-4"/>
    <property type="match status" value="1"/>
</dbReference>
<dbReference type="SUPFAM" id="SSF48613">
    <property type="entry name" value="Heme oxygenase-like"/>
    <property type="match status" value="1"/>
</dbReference>
<proteinExistence type="inferred from homology"/>
<protein>
    <recommendedName>
        <fullName evidence="1">Pyrroloquinoline-quinone synthase</fullName>
        <ecNumber evidence="1">1.3.3.11</ecNumber>
    </recommendedName>
    <alternativeName>
        <fullName evidence="1">Coenzyme PQQ synthesis protein C</fullName>
    </alternativeName>
    <alternativeName>
        <fullName evidence="1">Pyrroloquinoline quinone biosynthesis protein C</fullName>
    </alternativeName>
</protein>